<protein>
    <recommendedName>
        <fullName>ATP-dependent DNA helicase 2 subunit KU70</fullName>
        <shortName>OsKU70</shortName>
        <ecNumber>3.6.4.12</ecNumber>
    </recommendedName>
    <alternativeName>
        <fullName>ATP-dependent DNA helicase 2 subunit 1</fullName>
    </alternativeName>
    <alternativeName>
        <fullName>ATP-dependent DNA helicase II 70 kDa subunit</fullName>
    </alternativeName>
</protein>
<gene>
    <name type="primary">KU70</name>
    <name type="ordered locus">Os07g0184900</name>
    <name type="ordered locus">LOC_Os07g08729</name>
    <name type="ORF">OJ1046_F10.128</name>
    <name type="ORF">OsJ_23357</name>
    <name type="ORF">OsJ_23359</name>
</gene>
<sequence>MDLDPEGLFRDDSDEDDDNVQEREANKEMVVYLIDASPKMFTPATKADEKEETHFHTIVNCITHALKTQIIGRSYDEVAICFFNTKEKKNLQELAGVYVYNVTEREPLDRPDARLIKEFSCIEDSFMSNIGSRYGITSGSRENTLYNALWVAQALLRKGSVKTVSKRIVIFTNEDDPFGGLTGAVKTDMIRTTIQRARDAQDLGLSIELLPLSRPDEEFNMSLFYADLIGLEGDEIVDYLPSSGEKLEDMTNQLKKRMMKKRKVKTLAFAITNDVCIEVNTYALIRSTTPGAITWLDSISNLPLKAERSFICNDTGALIQDPQKRFQVYNDKIVKFSTRELSDVKRVSSHHLRLLGFKPLDYLKDYHNLRPSTFIYPSDEQIFGSTRVFVALHSSMRRLGRFALAFYGNPTRPQLVALIAQEEVTSAGGQIEPPGIHMIYLPYSDDVRYPEEVHLTSDDAPRATDEQIKKASNLLRRIDLKNFSVCQFSNPALQRHYGILEALALGEDEMPDVKDETLPDEEGLARPVVVKAVEEFKASVYGENYDQEEAEAAAAKAGASKKRKALTDAAAEKSAAHNWAELADTGKLKDMTVVDLKSYLSAHGLPVSGKKEALVSRILTHLGK</sequence>
<feature type="chain" id="PRO_0000394139" description="ATP-dependent DNA helicase 2 subunit KU70">
    <location>
        <begin position="1"/>
        <end position="624"/>
    </location>
</feature>
<feature type="domain" description="Ku">
    <location>
        <begin position="270"/>
        <end position="470"/>
    </location>
</feature>
<feature type="domain" description="SAP" evidence="2">
    <location>
        <begin position="588"/>
        <end position="622"/>
    </location>
</feature>
<feature type="region of interest" description="Disordered" evidence="3">
    <location>
        <begin position="1"/>
        <end position="22"/>
    </location>
</feature>
<organism>
    <name type="scientific">Oryza sativa subsp. japonica</name>
    <name type="common">Rice</name>
    <dbReference type="NCBI Taxonomy" id="39947"/>
    <lineage>
        <taxon>Eukaryota</taxon>
        <taxon>Viridiplantae</taxon>
        <taxon>Streptophyta</taxon>
        <taxon>Embryophyta</taxon>
        <taxon>Tracheophyta</taxon>
        <taxon>Spermatophyta</taxon>
        <taxon>Magnoliopsida</taxon>
        <taxon>Liliopsida</taxon>
        <taxon>Poales</taxon>
        <taxon>Poaceae</taxon>
        <taxon>BOP clade</taxon>
        <taxon>Oryzoideae</taxon>
        <taxon>Oryzeae</taxon>
        <taxon>Oryzinae</taxon>
        <taxon>Oryza</taxon>
        <taxon>Oryza sativa</taxon>
    </lineage>
</organism>
<comment type="function">
    <text evidence="1">Single-stranded DNA-dependent ATP-dependent helicase. Involved in DNA non-homologous end joining (NHEJ) required for double-strand break repair. When associated with KU70, binds to double-stranded telomeric and non-telomeric DNA sequences, but not to single-stranded DNA (By similarity). Required for the maintenance of chromosome stability and normal developmental growth. Plays a role in maintaining telomere length. Acts as a negative regulator in telomere homeostasis.</text>
</comment>
<comment type="catalytic activity">
    <reaction>
        <text>ATP + H2O = ADP + phosphate + H(+)</text>
        <dbReference type="Rhea" id="RHEA:13065"/>
        <dbReference type="ChEBI" id="CHEBI:15377"/>
        <dbReference type="ChEBI" id="CHEBI:15378"/>
        <dbReference type="ChEBI" id="CHEBI:30616"/>
        <dbReference type="ChEBI" id="CHEBI:43474"/>
        <dbReference type="ChEBI" id="CHEBI:456216"/>
        <dbReference type="EC" id="3.6.4.12"/>
    </reaction>
</comment>
<comment type="subunit">
    <text evidence="4">Interacts with KU80.</text>
</comment>
<comment type="subcellular location">
    <subcellularLocation>
        <location evidence="1">Nucleus</location>
    </subcellularLocation>
</comment>
<comment type="tissue specificity">
    <text evidence="4">Expressed ubiquitously.</text>
</comment>
<comment type="domain">
    <text>The N-terminal domain (1-265) is necessary for binding to KU80.</text>
</comment>
<comment type="disruption phenotype">
    <text evidence="4">Severe developmental defects in both vegetative and reproductive organs resulting in sterile flowers. Hypersensitivity to methylmethane sulfonate (MMS). Longer telomeres.</text>
</comment>
<comment type="similarity">
    <text evidence="5">Belongs to the ku70 family.</text>
</comment>
<comment type="sequence caution" evidence="5">
    <conflict type="erroneous gene model prediction">
        <sequence resource="EMBL-CDS" id="BAC83190"/>
    </conflict>
</comment>
<comment type="sequence caution" evidence="5">
    <conflict type="erroneous gene model prediction">
        <sequence resource="EMBL-CDS" id="EAZ38936"/>
    </conflict>
</comment>
<comment type="sequence caution" evidence="5">
    <conflict type="erroneous gene model prediction">
        <sequence resource="EMBL-CDS" id="EEE66696"/>
    </conflict>
</comment>
<proteinExistence type="evidence at protein level"/>
<name>KU70_ORYSJ</name>
<evidence type="ECO:0000250" key="1"/>
<evidence type="ECO:0000255" key="2">
    <source>
        <dbReference type="PROSITE-ProRule" id="PRU00186"/>
    </source>
</evidence>
<evidence type="ECO:0000256" key="3">
    <source>
        <dbReference type="SAM" id="MobiDB-lite"/>
    </source>
</evidence>
<evidence type="ECO:0000269" key="4">
    <source>
    </source>
</evidence>
<evidence type="ECO:0000305" key="5"/>
<dbReference type="EC" id="3.6.4.12"/>
<dbReference type="EMBL" id="AP003861">
    <property type="protein sequence ID" value="BAC83189.1"/>
    <property type="molecule type" value="Genomic_DNA"/>
</dbReference>
<dbReference type="EMBL" id="AP003861">
    <property type="protein sequence ID" value="BAC83190.1"/>
    <property type="status" value="ALT_SEQ"/>
    <property type="molecule type" value="Genomic_DNA"/>
</dbReference>
<dbReference type="EMBL" id="AP008213">
    <property type="protein sequence ID" value="BAF20975.1"/>
    <property type="molecule type" value="Genomic_DNA"/>
</dbReference>
<dbReference type="EMBL" id="AP014963">
    <property type="protein sequence ID" value="BAT00354.1"/>
    <property type="molecule type" value="Genomic_DNA"/>
</dbReference>
<dbReference type="EMBL" id="CM000144">
    <property type="protein sequence ID" value="EAZ38936.1"/>
    <property type="status" value="ALT_SEQ"/>
    <property type="molecule type" value="Genomic_DNA"/>
</dbReference>
<dbReference type="EMBL" id="CM000144">
    <property type="protein sequence ID" value="EEE66696.1"/>
    <property type="status" value="ALT_SEQ"/>
    <property type="molecule type" value="Genomic_DNA"/>
</dbReference>
<dbReference type="EMBL" id="AK102066">
    <property type="protein sequence ID" value="BAG95371.1"/>
    <property type="molecule type" value="mRNA"/>
</dbReference>
<dbReference type="RefSeq" id="XP_015646738.1">
    <property type="nucleotide sequence ID" value="XM_015791252.1"/>
</dbReference>
<dbReference type="SMR" id="Q7F1M0"/>
<dbReference type="FunCoup" id="Q7F1M0">
    <property type="interactions" value="2918"/>
</dbReference>
<dbReference type="STRING" id="39947.Q7F1M0"/>
<dbReference type="PaxDb" id="39947-Q7F1M0"/>
<dbReference type="EnsemblPlants" id="Os07t0184900-01">
    <property type="protein sequence ID" value="Os07t0184900-01"/>
    <property type="gene ID" value="Os07g0184900"/>
</dbReference>
<dbReference type="Gramene" id="Os07t0184900-01">
    <property type="protein sequence ID" value="Os07t0184900-01"/>
    <property type="gene ID" value="Os07g0184900"/>
</dbReference>
<dbReference type="KEGG" id="dosa:Os07g0184900"/>
<dbReference type="eggNOG" id="KOG2327">
    <property type="taxonomic scope" value="Eukaryota"/>
</dbReference>
<dbReference type="HOGENOM" id="CLU_014815_2_0_1"/>
<dbReference type="InParanoid" id="Q7F1M0"/>
<dbReference type="OMA" id="FWANVKH"/>
<dbReference type="OrthoDB" id="3249161at2759"/>
<dbReference type="Proteomes" id="UP000000763">
    <property type="component" value="Chromosome 7"/>
</dbReference>
<dbReference type="Proteomes" id="UP000007752">
    <property type="component" value="Chromosome 7"/>
</dbReference>
<dbReference type="Proteomes" id="UP000059680">
    <property type="component" value="Chromosome 7"/>
</dbReference>
<dbReference type="ExpressionAtlas" id="Q7F1M0">
    <property type="expression patterns" value="baseline and differential"/>
</dbReference>
<dbReference type="GO" id="GO:0043564">
    <property type="term" value="C:Ku70:Ku80 complex"/>
    <property type="evidence" value="ECO:0000318"/>
    <property type="project" value="GO_Central"/>
</dbReference>
<dbReference type="GO" id="GO:0005524">
    <property type="term" value="F:ATP binding"/>
    <property type="evidence" value="ECO:0007669"/>
    <property type="project" value="UniProtKB-KW"/>
</dbReference>
<dbReference type="GO" id="GO:0016887">
    <property type="term" value="F:ATP hydrolysis activity"/>
    <property type="evidence" value="ECO:0007669"/>
    <property type="project" value="RHEA"/>
</dbReference>
<dbReference type="GO" id="GO:0003684">
    <property type="term" value="F:damaged DNA binding"/>
    <property type="evidence" value="ECO:0007669"/>
    <property type="project" value="InterPro"/>
</dbReference>
<dbReference type="GO" id="GO:0003678">
    <property type="term" value="F:DNA helicase activity"/>
    <property type="evidence" value="ECO:0007669"/>
    <property type="project" value="InterPro"/>
</dbReference>
<dbReference type="GO" id="GO:0003690">
    <property type="term" value="F:double-stranded DNA binding"/>
    <property type="evidence" value="ECO:0007669"/>
    <property type="project" value="EnsemblPlants"/>
</dbReference>
<dbReference type="GO" id="GO:0042162">
    <property type="term" value="F:telomeric DNA binding"/>
    <property type="evidence" value="ECO:0000318"/>
    <property type="project" value="GO_Central"/>
</dbReference>
<dbReference type="GO" id="GO:0006310">
    <property type="term" value="P:DNA recombination"/>
    <property type="evidence" value="ECO:0007669"/>
    <property type="project" value="UniProtKB-KW"/>
</dbReference>
<dbReference type="GO" id="GO:0006281">
    <property type="term" value="P:DNA repair"/>
    <property type="evidence" value="ECO:0000315"/>
    <property type="project" value="UniProtKB"/>
</dbReference>
<dbReference type="GO" id="GO:0006303">
    <property type="term" value="P:double-strand break repair via nonhomologous end joining"/>
    <property type="evidence" value="ECO:0000318"/>
    <property type="project" value="GO_Central"/>
</dbReference>
<dbReference type="GO" id="GO:0009408">
    <property type="term" value="P:response to heat"/>
    <property type="evidence" value="ECO:0007669"/>
    <property type="project" value="EnsemblPlants"/>
</dbReference>
<dbReference type="GO" id="GO:0000723">
    <property type="term" value="P:telomere maintenance"/>
    <property type="evidence" value="ECO:0000315"/>
    <property type="project" value="UniProtKB"/>
</dbReference>
<dbReference type="CDD" id="cd00788">
    <property type="entry name" value="KU70"/>
    <property type="match status" value="1"/>
</dbReference>
<dbReference type="CDD" id="cd01458">
    <property type="entry name" value="vWA_ku"/>
    <property type="match status" value="1"/>
</dbReference>
<dbReference type="FunFam" id="1.10.1600.10:FF:000003">
    <property type="entry name" value="ATP-dependent DNA helicase 2 subunit KU70"/>
    <property type="match status" value="1"/>
</dbReference>
<dbReference type="FunFam" id="1.10.720.30:FF:000021">
    <property type="entry name" value="ATP-dependent DNA helicase 2 subunit KU70"/>
    <property type="match status" value="1"/>
</dbReference>
<dbReference type="FunFam" id="3.40.50.410:FF:000068">
    <property type="entry name" value="ATP-dependent DNA helicase 2 subunit KU70"/>
    <property type="match status" value="1"/>
</dbReference>
<dbReference type="FunFam" id="4.10.970.10:FF:000004">
    <property type="entry name" value="ATP-dependent DNA helicase 2 subunit KU70"/>
    <property type="match status" value="1"/>
</dbReference>
<dbReference type="FunFam" id="2.40.290.10:FF:000001">
    <property type="entry name" value="X-ray repair cross complementing 6"/>
    <property type="match status" value="1"/>
</dbReference>
<dbReference type="Gene3D" id="1.10.1600.10">
    <property type="match status" value="1"/>
</dbReference>
<dbReference type="Gene3D" id="2.40.290.10">
    <property type="match status" value="1"/>
</dbReference>
<dbReference type="Gene3D" id="4.10.970.10">
    <property type="entry name" value="Ku70, bridge and pillars"/>
    <property type="match status" value="1"/>
</dbReference>
<dbReference type="Gene3D" id="1.10.720.30">
    <property type="entry name" value="SAP domain"/>
    <property type="match status" value="1"/>
</dbReference>
<dbReference type="Gene3D" id="3.40.50.410">
    <property type="entry name" value="von Willebrand factor, type A domain"/>
    <property type="match status" value="1"/>
</dbReference>
<dbReference type="InterPro" id="IPR006165">
    <property type="entry name" value="Ku70"/>
</dbReference>
<dbReference type="InterPro" id="IPR006164">
    <property type="entry name" value="Ku70/Ku80_beta-barrel_dom"/>
</dbReference>
<dbReference type="InterPro" id="IPR027388">
    <property type="entry name" value="Ku70_bridge/pillars_dom_sf"/>
</dbReference>
<dbReference type="InterPro" id="IPR047087">
    <property type="entry name" value="KU70_core_dom"/>
</dbReference>
<dbReference type="InterPro" id="IPR005160">
    <property type="entry name" value="Ku_C"/>
</dbReference>
<dbReference type="InterPro" id="IPR005161">
    <property type="entry name" value="Ku_N"/>
</dbReference>
<dbReference type="InterPro" id="IPR003034">
    <property type="entry name" value="SAP_dom"/>
</dbReference>
<dbReference type="InterPro" id="IPR036361">
    <property type="entry name" value="SAP_dom_sf"/>
</dbReference>
<dbReference type="InterPro" id="IPR016194">
    <property type="entry name" value="SPOC-like_C_dom_sf"/>
</dbReference>
<dbReference type="InterPro" id="IPR036465">
    <property type="entry name" value="vWFA_dom_sf"/>
</dbReference>
<dbReference type="NCBIfam" id="TIGR00578">
    <property type="entry name" value="ku70"/>
    <property type="match status" value="1"/>
</dbReference>
<dbReference type="PANTHER" id="PTHR12604">
    <property type="entry name" value="KU AUTOANTIGEN DNA HELICASE"/>
    <property type="match status" value="1"/>
</dbReference>
<dbReference type="PANTHER" id="PTHR12604:SF2">
    <property type="entry name" value="X-RAY REPAIR CROSS-COMPLEMENTING PROTEIN 6"/>
    <property type="match status" value="1"/>
</dbReference>
<dbReference type="Pfam" id="PF02735">
    <property type="entry name" value="Ku"/>
    <property type="match status" value="1"/>
</dbReference>
<dbReference type="Pfam" id="PF03730">
    <property type="entry name" value="Ku_C"/>
    <property type="match status" value="1"/>
</dbReference>
<dbReference type="Pfam" id="PF03731">
    <property type="entry name" value="Ku_N"/>
    <property type="match status" value="1"/>
</dbReference>
<dbReference type="Pfam" id="PF02037">
    <property type="entry name" value="SAP"/>
    <property type="match status" value="1"/>
</dbReference>
<dbReference type="PIRSF" id="PIRSF003033">
    <property type="entry name" value="Ku70"/>
    <property type="match status" value="1"/>
</dbReference>
<dbReference type="SMART" id="SM00559">
    <property type="entry name" value="Ku78"/>
    <property type="match status" value="1"/>
</dbReference>
<dbReference type="SMART" id="SM00513">
    <property type="entry name" value="SAP"/>
    <property type="match status" value="1"/>
</dbReference>
<dbReference type="SUPFAM" id="SSF68906">
    <property type="entry name" value="SAP domain"/>
    <property type="match status" value="1"/>
</dbReference>
<dbReference type="SUPFAM" id="SSF100939">
    <property type="entry name" value="SPOC domain-like"/>
    <property type="match status" value="1"/>
</dbReference>
<dbReference type="SUPFAM" id="SSF53300">
    <property type="entry name" value="vWA-like"/>
    <property type="match status" value="1"/>
</dbReference>
<dbReference type="PROSITE" id="PS50800">
    <property type="entry name" value="SAP"/>
    <property type="match status" value="1"/>
</dbReference>
<reference key="1">
    <citation type="journal article" date="2005" name="Nature">
        <title>The map-based sequence of the rice genome.</title>
        <authorList>
            <consortium name="International rice genome sequencing project (IRGSP)"/>
        </authorList>
    </citation>
    <scope>NUCLEOTIDE SEQUENCE [LARGE SCALE GENOMIC DNA]</scope>
    <source>
        <strain>cv. Nipponbare</strain>
    </source>
</reference>
<reference key="2">
    <citation type="journal article" date="2008" name="Nucleic Acids Res.">
        <title>The rice annotation project database (RAP-DB): 2008 update.</title>
        <authorList>
            <consortium name="The rice annotation project (RAP)"/>
        </authorList>
    </citation>
    <scope>GENOME REANNOTATION</scope>
    <source>
        <strain>cv. Nipponbare</strain>
    </source>
</reference>
<reference key="3">
    <citation type="journal article" date="2013" name="Rice">
        <title>Improvement of the Oryza sativa Nipponbare reference genome using next generation sequence and optical map data.</title>
        <authorList>
            <person name="Kawahara Y."/>
            <person name="de la Bastide M."/>
            <person name="Hamilton J.P."/>
            <person name="Kanamori H."/>
            <person name="McCombie W.R."/>
            <person name="Ouyang S."/>
            <person name="Schwartz D.C."/>
            <person name="Tanaka T."/>
            <person name="Wu J."/>
            <person name="Zhou S."/>
            <person name="Childs K.L."/>
            <person name="Davidson R.M."/>
            <person name="Lin H."/>
            <person name="Quesada-Ocampo L."/>
            <person name="Vaillancourt B."/>
            <person name="Sakai H."/>
            <person name="Lee S.S."/>
            <person name="Kim J."/>
            <person name="Numa H."/>
            <person name="Itoh T."/>
            <person name="Buell C.R."/>
            <person name="Matsumoto T."/>
        </authorList>
    </citation>
    <scope>GENOME REANNOTATION</scope>
    <source>
        <strain>cv. Nipponbare</strain>
    </source>
</reference>
<reference key="4">
    <citation type="journal article" date="2005" name="PLoS Biol.">
        <title>The genomes of Oryza sativa: a history of duplications.</title>
        <authorList>
            <person name="Yu J."/>
            <person name="Wang J."/>
            <person name="Lin W."/>
            <person name="Li S."/>
            <person name="Li H."/>
            <person name="Zhou J."/>
            <person name="Ni P."/>
            <person name="Dong W."/>
            <person name="Hu S."/>
            <person name="Zeng C."/>
            <person name="Zhang J."/>
            <person name="Zhang Y."/>
            <person name="Li R."/>
            <person name="Xu Z."/>
            <person name="Li S."/>
            <person name="Li X."/>
            <person name="Zheng H."/>
            <person name="Cong L."/>
            <person name="Lin L."/>
            <person name="Yin J."/>
            <person name="Geng J."/>
            <person name="Li G."/>
            <person name="Shi J."/>
            <person name="Liu J."/>
            <person name="Lv H."/>
            <person name="Li J."/>
            <person name="Wang J."/>
            <person name="Deng Y."/>
            <person name="Ran L."/>
            <person name="Shi X."/>
            <person name="Wang X."/>
            <person name="Wu Q."/>
            <person name="Li C."/>
            <person name="Ren X."/>
            <person name="Wang J."/>
            <person name="Wang X."/>
            <person name="Li D."/>
            <person name="Liu D."/>
            <person name="Zhang X."/>
            <person name="Ji Z."/>
            <person name="Zhao W."/>
            <person name="Sun Y."/>
            <person name="Zhang Z."/>
            <person name="Bao J."/>
            <person name="Han Y."/>
            <person name="Dong L."/>
            <person name="Ji J."/>
            <person name="Chen P."/>
            <person name="Wu S."/>
            <person name="Liu J."/>
            <person name="Xiao Y."/>
            <person name="Bu D."/>
            <person name="Tan J."/>
            <person name="Yang L."/>
            <person name="Ye C."/>
            <person name="Zhang J."/>
            <person name="Xu J."/>
            <person name="Zhou Y."/>
            <person name="Yu Y."/>
            <person name="Zhang B."/>
            <person name="Zhuang S."/>
            <person name="Wei H."/>
            <person name="Liu B."/>
            <person name="Lei M."/>
            <person name="Yu H."/>
            <person name="Li Y."/>
            <person name="Xu H."/>
            <person name="Wei S."/>
            <person name="He X."/>
            <person name="Fang L."/>
            <person name="Zhang Z."/>
            <person name="Zhang Y."/>
            <person name="Huang X."/>
            <person name="Su Z."/>
            <person name="Tong W."/>
            <person name="Li J."/>
            <person name="Tong Z."/>
            <person name="Li S."/>
            <person name="Ye J."/>
            <person name="Wang L."/>
            <person name="Fang L."/>
            <person name="Lei T."/>
            <person name="Chen C.-S."/>
            <person name="Chen H.-C."/>
            <person name="Xu Z."/>
            <person name="Li H."/>
            <person name="Huang H."/>
            <person name="Zhang F."/>
            <person name="Xu H."/>
            <person name="Li N."/>
            <person name="Zhao C."/>
            <person name="Li S."/>
            <person name="Dong L."/>
            <person name="Huang Y."/>
            <person name="Li L."/>
            <person name="Xi Y."/>
            <person name="Qi Q."/>
            <person name="Li W."/>
            <person name="Zhang B."/>
            <person name="Hu W."/>
            <person name="Zhang Y."/>
            <person name="Tian X."/>
            <person name="Jiao Y."/>
            <person name="Liang X."/>
            <person name="Jin J."/>
            <person name="Gao L."/>
            <person name="Zheng W."/>
            <person name="Hao B."/>
            <person name="Liu S.-M."/>
            <person name="Wang W."/>
            <person name="Yuan L."/>
            <person name="Cao M."/>
            <person name="McDermott J."/>
            <person name="Samudrala R."/>
            <person name="Wang J."/>
            <person name="Wong G.K.-S."/>
            <person name="Yang H."/>
        </authorList>
    </citation>
    <scope>NUCLEOTIDE SEQUENCE [LARGE SCALE GENOMIC DNA]</scope>
    <source>
        <strain>cv. Nipponbare</strain>
    </source>
</reference>
<reference key="5">
    <citation type="journal article" date="2003" name="Science">
        <title>Collection, mapping, and annotation of over 28,000 cDNA clones from japonica rice.</title>
        <authorList>
            <consortium name="The rice full-length cDNA consortium"/>
        </authorList>
    </citation>
    <scope>NUCLEOTIDE SEQUENCE [LARGE SCALE MRNA]</scope>
    <source>
        <strain>cv. Nipponbare</strain>
    </source>
</reference>
<reference key="6">
    <citation type="journal article" date="2010" name="Plant Physiol.">
        <title>OsKu70 is associated with developmental growth and genome stability in rice.</title>
        <authorList>
            <person name="Hong J.P."/>
            <person name="Byun M.Y."/>
            <person name="An K."/>
            <person name="Yang S.J."/>
            <person name="An G."/>
            <person name="Kim W.T."/>
        </authorList>
    </citation>
    <scope>TISSUE SPECIFICITY</scope>
    <scope>INTERACTION WITH KU80</scope>
    <scope>DISRUPTION PHENOTYPE</scope>
</reference>
<keyword id="KW-0067">ATP-binding</keyword>
<keyword id="KW-0227">DNA damage</keyword>
<keyword id="KW-0233">DNA recombination</keyword>
<keyword id="KW-0234">DNA repair</keyword>
<keyword id="KW-0238">DNA-binding</keyword>
<keyword id="KW-0347">Helicase</keyword>
<keyword id="KW-0378">Hydrolase</keyword>
<keyword id="KW-0547">Nucleotide-binding</keyword>
<keyword id="KW-0539">Nucleus</keyword>
<keyword id="KW-1185">Reference proteome</keyword>
<accession>Q7F1M0</accession>
<accession>A0A0N7KN15</accession>
<accession>A3BH97</accession>
<accession>B9FVV9</accession>
<accession>Q7F1L9</accession>